<keyword id="KW-0025">Alternative splicing</keyword>
<keyword id="KW-0963">Cytoplasm</keyword>
<keyword id="KW-0217">Developmental protein</keyword>
<keyword id="KW-0221">Differentiation</keyword>
<keyword id="KW-0539">Nucleus</keyword>
<keyword id="KW-0597">Phosphoprotein</keyword>
<keyword id="KW-1185">Reference proteome</keyword>
<keyword id="KW-0744">Spermatogenesis</keyword>
<keyword id="KW-0804">Transcription</keyword>
<keyword id="KW-0805">Transcription regulation</keyword>
<accession>Q7ZY81</accession>
<accession>Q4U0Y5</accession>
<feature type="chain" id="PRO_0000345635" description="Nucleosome assembly protein 1-like 1-B">
    <location>
        <begin position="1"/>
        <end position="393"/>
    </location>
</feature>
<feature type="region of interest" description="Disordered" evidence="4">
    <location>
        <begin position="1"/>
        <end position="38"/>
    </location>
</feature>
<feature type="region of interest" description="Disordered" evidence="4">
    <location>
        <begin position="347"/>
        <end position="393"/>
    </location>
</feature>
<feature type="short sequence motif" description="NAP1L motif" evidence="1">
    <location>
        <begin position="126"/>
        <end position="151"/>
    </location>
</feature>
<feature type="short sequence motif" description="Nuclear localization signal" evidence="3">
    <location>
        <begin position="274"/>
        <end position="280"/>
    </location>
</feature>
<feature type="compositionally biased region" description="Basic and acidic residues" evidence="4">
    <location>
        <begin position="1"/>
        <end position="10"/>
    </location>
</feature>
<feature type="compositionally biased region" description="Acidic residues" evidence="4">
    <location>
        <begin position="11"/>
        <end position="30"/>
    </location>
</feature>
<feature type="compositionally biased region" description="Acidic residues" evidence="4">
    <location>
        <begin position="347"/>
        <end position="377"/>
    </location>
</feature>
<feature type="splice variant" id="VSP_052857" description="In isoform 2." evidence="7">
    <original>KAQNPAECKQQ</original>
    <variation>V</variation>
    <location>
        <begin position="383"/>
        <end position="393"/>
    </location>
</feature>
<evidence type="ECO:0000250" key="1">
    <source>
        <dbReference type="UniProtKB" id="P55209"/>
    </source>
</evidence>
<evidence type="ECO:0000250" key="2">
    <source>
        <dbReference type="UniProtKB" id="Q4U0Y4"/>
    </source>
</evidence>
<evidence type="ECO:0000255" key="3"/>
<evidence type="ECO:0000256" key="4">
    <source>
        <dbReference type="SAM" id="MobiDB-lite"/>
    </source>
</evidence>
<evidence type="ECO:0000269" key="5">
    <source>
    </source>
</evidence>
<evidence type="ECO:0000269" key="6">
    <source>
    </source>
</evidence>
<evidence type="ECO:0000303" key="7">
    <source>
    </source>
</evidence>
<evidence type="ECO:0000303" key="8">
    <source>
    </source>
</evidence>
<evidence type="ECO:0000305" key="9"/>
<evidence type="ECO:0000312" key="10">
    <source>
        <dbReference type="EMBL" id="AAH43903.1"/>
    </source>
</evidence>
<evidence type="ECO:0000312" key="11">
    <source>
        <dbReference type="EMBL" id="AAY43227.1"/>
    </source>
</evidence>
<evidence type="ECO:0000312" key="12">
    <source>
        <dbReference type="EMBL" id="AAY43228.1"/>
    </source>
</evidence>
<dbReference type="EMBL" id="DQ020266">
    <property type="protein sequence ID" value="AAY43227.1"/>
    <property type="molecule type" value="mRNA"/>
</dbReference>
<dbReference type="EMBL" id="DQ020267">
    <property type="protein sequence ID" value="AAY43228.1"/>
    <property type="molecule type" value="mRNA"/>
</dbReference>
<dbReference type="EMBL" id="BC043903">
    <property type="protein sequence ID" value="AAH43903.1"/>
    <property type="molecule type" value="mRNA"/>
</dbReference>
<dbReference type="RefSeq" id="NP_001080547.1">
    <molecule id="Q7ZY81-1"/>
    <property type="nucleotide sequence ID" value="NM_001087078.1"/>
</dbReference>
<dbReference type="RefSeq" id="XP_018106203.1">
    <molecule id="Q7ZY81-2"/>
    <property type="nucleotide sequence ID" value="XM_018250714.1"/>
</dbReference>
<dbReference type="SMR" id="Q7ZY81"/>
<dbReference type="BioGRID" id="98481">
    <property type="interactions" value="1"/>
</dbReference>
<dbReference type="IntAct" id="Q7ZY81">
    <property type="interactions" value="2"/>
</dbReference>
<dbReference type="DNASU" id="380239"/>
<dbReference type="GeneID" id="380239"/>
<dbReference type="KEGG" id="xla:380239"/>
<dbReference type="AGR" id="Xenbase:XB-GENE-6256560"/>
<dbReference type="CTD" id="380239"/>
<dbReference type="Xenbase" id="XB-GENE-6256560">
    <property type="gene designation" value="nap1l1.L"/>
</dbReference>
<dbReference type="OMA" id="XYDEEGE"/>
<dbReference type="OrthoDB" id="27325at2759"/>
<dbReference type="Proteomes" id="UP000186698">
    <property type="component" value="Chromosome 3L"/>
</dbReference>
<dbReference type="Bgee" id="380239">
    <property type="expression patterns" value="Expressed in spleen and 19 other cell types or tissues"/>
</dbReference>
<dbReference type="GO" id="GO:0000785">
    <property type="term" value="C:chromatin"/>
    <property type="evidence" value="ECO:0000318"/>
    <property type="project" value="GO_Central"/>
</dbReference>
<dbReference type="GO" id="GO:0005737">
    <property type="term" value="C:cytoplasm"/>
    <property type="evidence" value="ECO:0000250"/>
    <property type="project" value="UniProtKB"/>
</dbReference>
<dbReference type="GO" id="GO:0005634">
    <property type="term" value="C:nucleus"/>
    <property type="evidence" value="ECO:0000250"/>
    <property type="project" value="UniProtKB"/>
</dbReference>
<dbReference type="GO" id="GO:0003682">
    <property type="term" value="F:chromatin binding"/>
    <property type="evidence" value="ECO:0000318"/>
    <property type="project" value="GO_Central"/>
</dbReference>
<dbReference type="GO" id="GO:0030332">
    <property type="term" value="F:cyclin binding"/>
    <property type="evidence" value="ECO:0000353"/>
    <property type="project" value="UniProtKB"/>
</dbReference>
<dbReference type="GO" id="GO:0042393">
    <property type="term" value="F:histone binding"/>
    <property type="evidence" value="ECO:0000353"/>
    <property type="project" value="UniProtKB"/>
</dbReference>
<dbReference type="GO" id="GO:0042802">
    <property type="term" value="F:identical protein binding"/>
    <property type="evidence" value="ECO:0000250"/>
    <property type="project" value="UniProtKB"/>
</dbReference>
<dbReference type="GO" id="GO:0006334">
    <property type="term" value="P:nucleosome assembly"/>
    <property type="evidence" value="ECO:0000315"/>
    <property type="project" value="UniProtKB"/>
</dbReference>
<dbReference type="GO" id="GO:0045944">
    <property type="term" value="P:positive regulation of transcription by RNA polymerase II"/>
    <property type="evidence" value="ECO:0000250"/>
    <property type="project" value="UniProtKB"/>
</dbReference>
<dbReference type="GO" id="GO:0060215">
    <property type="term" value="P:primitive hemopoiesis"/>
    <property type="evidence" value="ECO:0000250"/>
    <property type="project" value="UniProtKB"/>
</dbReference>
<dbReference type="GO" id="GO:0007283">
    <property type="term" value="P:spermatogenesis"/>
    <property type="evidence" value="ECO:0007669"/>
    <property type="project" value="UniProtKB-KW"/>
</dbReference>
<dbReference type="FunFam" id="1.20.5.1500:FF:000001">
    <property type="entry name" value="Nucleosome assembly protein 1-like 1"/>
    <property type="match status" value="1"/>
</dbReference>
<dbReference type="FunFam" id="3.30.1120.90:FF:000001">
    <property type="entry name" value="Nucleosome assembly protein 1-like 1"/>
    <property type="match status" value="1"/>
</dbReference>
<dbReference type="Gene3D" id="1.20.5.1500">
    <property type="match status" value="1"/>
</dbReference>
<dbReference type="Gene3D" id="3.30.1120.90">
    <property type="entry name" value="Nucleosome assembly protein"/>
    <property type="match status" value="1"/>
</dbReference>
<dbReference type="InterPro" id="IPR037231">
    <property type="entry name" value="NAP-like_sf"/>
</dbReference>
<dbReference type="InterPro" id="IPR002164">
    <property type="entry name" value="NAP_family"/>
</dbReference>
<dbReference type="PANTHER" id="PTHR11875">
    <property type="entry name" value="TESTIS-SPECIFIC Y-ENCODED PROTEIN"/>
    <property type="match status" value="1"/>
</dbReference>
<dbReference type="Pfam" id="PF00956">
    <property type="entry name" value="NAP"/>
    <property type="match status" value="1"/>
</dbReference>
<dbReference type="SUPFAM" id="SSF143113">
    <property type="entry name" value="NAP-like"/>
    <property type="match status" value="1"/>
</dbReference>
<sequence>MANIDNKEQTELDQQDMEDVEDVEEEETGEEANSKARQLTAQMMQNPQVLAALQERLDDLVGTPTGYIESLPKVVKRRVNALKNLQVKCAQIEAKFYEEVHELERKYAALYQPFFEKRSDIINASYEPTEEECEWKVDEEEDIAEDLKEKAKLEEEKKDEEKEDPKGIPEFWLTVFKNVDLLSDMVQEHDEPILKHLKDIKVKFSEAGQPMNFMLEFHFEPNEFFTNELLTKTYKMRSEPDESDPFSFDGPEIMGCTGCLIDWKKGKNVTLKTIKKKQKHKGRGTVRTVTKTVPNDSFFNFFSPPEVPENGELDDDAEAILTADFEIGHFLRERIIPRSVLYFTGEAIEDDDDDYDEEGEEADDEEGEEEADEDHDPDFDPKKAQNPAECKQQ</sequence>
<proteinExistence type="evidence at protein level"/>
<comment type="function">
    <text evidence="2 5">Acts as a chaperone for the linker histone to facilitate deposition of histone B4 onto linker DNA (PubMed:15928086). Required for both remodeling of sperm chromatin into nucleosomes, and linker histone binding to nucleosome core dimers. Plays a role in tissue-specific gene regulation. Required for primitive hemopoiesis, acting upstream of tal1/scl (By similarity).</text>
</comment>
<comment type="subunit">
    <text evidence="2 5 6">Forms homomultimers (By similarity). Interacts with histone b4. Interacts with the B-type cyclins ccnb1 and ccnb2.</text>
</comment>
<comment type="subcellular location">
    <subcellularLocation>
        <location evidence="2">Cytoplasm</location>
    </subcellularLocation>
    <subcellularLocation>
        <location evidence="2">Nucleus</location>
    </subcellularLocation>
    <text evidence="2">Cytoplasmic prior to the midblastula transition, becoming predominantly nuclear subsequently.</text>
</comment>
<comment type="alternative products">
    <event type="alternative splicing"/>
    <isoform>
        <id>Q7ZY81-1</id>
        <name evidence="5">1</name>
        <name evidence="11">p60B</name>
        <sequence type="displayed"/>
    </isoform>
    <isoform>
        <id>Q7ZY81-2</id>
        <name evidence="5">2</name>
        <name evidence="12">p56B</name>
        <sequence type="described" ref="VSP_052857"/>
    </isoform>
</comment>
<comment type="domain">
    <text evidence="1">The NAP1L motif is required for the histone chaperone activity.</text>
</comment>
<comment type="domain">
    <text evidence="1">The acidic domains are probably involved in the interaction with histones.</text>
</comment>
<comment type="PTM">
    <text evidence="6">Phosphorylated by cyclin B-cdc2 kinase complexes.</text>
</comment>
<comment type="similarity">
    <text evidence="3">Belongs to the nucleosome assembly protein (NAP) family.</text>
</comment>
<gene>
    <name type="primary">nap1l1-b</name>
    <name type="synonym">nap1-b</name>
</gene>
<protein>
    <recommendedName>
        <fullName evidence="1 8">Nucleosome assembly protein 1-like 1-B</fullName>
        <shortName>xNAP1L-B</shortName>
    </recommendedName>
    <alternativeName>
        <fullName evidence="7">Nucleosome assembly protein 1</fullName>
        <shortName evidence="8">NAP1</shortName>
        <shortName evidence="7 8">xNAP-1</shortName>
    </alternativeName>
</protein>
<name>NPL1B_XENLA</name>
<reference evidence="9 11" key="1">
    <citation type="journal article" date="2005" name="Proc. Natl. Acad. Sci. U.S.A.">
        <title>Nucleosome assembly protein-1 is a linker histone chaperone in Xenopus eggs.</title>
        <authorList>
            <person name="Shintomi K."/>
            <person name="Iwabuchi M."/>
            <person name="Saeki H."/>
            <person name="Ura K."/>
            <person name="Kishimoto T."/>
            <person name="Ohsumi K."/>
        </authorList>
    </citation>
    <scope>NUCLEOTIDE SEQUENCE [MRNA] (ISOFORMS 1 AND 2)</scope>
    <scope>FUNCTION</scope>
    <scope>INTERACTION WITH B4</scope>
    <source>
        <tissue evidence="5">Egg</tissue>
    </source>
</reference>
<reference evidence="9 10" key="2">
    <citation type="submission" date="2003-01" db="EMBL/GenBank/DDBJ databases">
        <authorList>
            <consortium name="NIH - Xenopus Gene Collection (XGC) project"/>
        </authorList>
    </citation>
    <scope>NUCLEOTIDE SEQUENCE [LARGE SCALE MRNA] (ISOFORM 1)</scope>
    <source>
        <tissue evidence="10">Embryo</tissue>
    </source>
</reference>
<reference evidence="9" key="3">
    <citation type="journal article" date="1995" name="J. Cell Biol.">
        <title>Members of the NAP/SET family of proteins interact specifically with B-type cyclins.</title>
        <authorList>
            <person name="Kellogg D.R."/>
            <person name="Kikuchi A."/>
            <person name="Fujii-Nakata T."/>
            <person name="Turck C.W."/>
            <person name="Murray A.W."/>
        </authorList>
    </citation>
    <scope>INTERACTION WITH CCNB1 AND CCNB2</scope>
    <scope>PHOSPHORYLATION</scope>
</reference>
<organism>
    <name type="scientific">Xenopus laevis</name>
    <name type="common">African clawed frog</name>
    <dbReference type="NCBI Taxonomy" id="8355"/>
    <lineage>
        <taxon>Eukaryota</taxon>
        <taxon>Metazoa</taxon>
        <taxon>Chordata</taxon>
        <taxon>Craniata</taxon>
        <taxon>Vertebrata</taxon>
        <taxon>Euteleostomi</taxon>
        <taxon>Amphibia</taxon>
        <taxon>Batrachia</taxon>
        <taxon>Anura</taxon>
        <taxon>Pipoidea</taxon>
        <taxon>Pipidae</taxon>
        <taxon>Xenopodinae</taxon>
        <taxon>Xenopus</taxon>
        <taxon>Xenopus</taxon>
    </lineage>
</organism>